<accession>A4WNV2</accession>
<reference key="1">
    <citation type="submission" date="2007-04" db="EMBL/GenBank/DDBJ databases">
        <title>Complete sequence of chromosome of Rhodobacter sphaeroides ATCC 17025.</title>
        <authorList>
            <consortium name="US DOE Joint Genome Institute"/>
            <person name="Copeland A."/>
            <person name="Lucas S."/>
            <person name="Lapidus A."/>
            <person name="Barry K."/>
            <person name="Detter J.C."/>
            <person name="Glavina del Rio T."/>
            <person name="Hammon N."/>
            <person name="Israni S."/>
            <person name="Dalin E."/>
            <person name="Tice H."/>
            <person name="Pitluck S."/>
            <person name="Chertkov O."/>
            <person name="Brettin T."/>
            <person name="Bruce D."/>
            <person name="Han C."/>
            <person name="Schmutz J."/>
            <person name="Larimer F."/>
            <person name="Land M."/>
            <person name="Hauser L."/>
            <person name="Kyrpides N."/>
            <person name="Kim E."/>
            <person name="Richardson P."/>
            <person name="Mackenzie C."/>
            <person name="Choudhary M."/>
            <person name="Donohue T.J."/>
            <person name="Kaplan S."/>
        </authorList>
    </citation>
    <scope>NUCLEOTIDE SEQUENCE [LARGE SCALE GENOMIC DNA]</scope>
    <source>
        <strain>ATCC 17025 / ATH 2.4.3</strain>
    </source>
</reference>
<comment type="function">
    <text evidence="1">Specifically methylates the pseudouridine at position 1915 (m3Psi1915) in 23S rRNA.</text>
</comment>
<comment type="catalytic activity">
    <reaction evidence="1">
        <text>pseudouridine(1915) in 23S rRNA + S-adenosyl-L-methionine = N(3)-methylpseudouridine(1915) in 23S rRNA + S-adenosyl-L-homocysteine + H(+)</text>
        <dbReference type="Rhea" id="RHEA:42752"/>
        <dbReference type="Rhea" id="RHEA-COMP:10221"/>
        <dbReference type="Rhea" id="RHEA-COMP:10222"/>
        <dbReference type="ChEBI" id="CHEBI:15378"/>
        <dbReference type="ChEBI" id="CHEBI:57856"/>
        <dbReference type="ChEBI" id="CHEBI:59789"/>
        <dbReference type="ChEBI" id="CHEBI:65314"/>
        <dbReference type="ChEBI" id="CHEBI:74486"/>
        <dbReference type="EC" id="2.1.1.177"/>
    </reaction>
</comment>
<comment type="subunit">
    <text evidence="1">Homodimer.</text>
</comment>
<comment type="subcellular location">
    <subcellularLocation>
        <location evidence="1">Cytoplasm</location>
    </subcellularLocation>
</comment>
<comment type="similarity">
    <text evidence="1">Belongs to the RNA methyltransferase RlmH family.</text>
</comment>
<feature type="chain" id="PRO_1000061833" description="Ribosomal RNA large subunit methyltransferase H">
    <location>
        <begin position="1"/>
        <end position="155"/>
    </location>
</feature>
<feature type="binding site" evidence="1">
    <location>
        <position position="71"/>
    </location>
    <ligand>
        <name>S-adenosyl-L-methionine</name>
        <dbReference type="ChEBI" id="CHEBI:59789"/>
    </ligand>
</feature>
<feature type="binding site" evidence="1">
    <location>
        <position position="103"/>
    </location>
    <ligand>
        <name>S-adenosyl-L-methionine</name>
        <dbReference type="ChEBI" id="CHEBI:59789"/>
    </ligand>
</feature>
<feature type="binding site" evidence="1">
    <location>
        <begin position="122"/>
        <end position="127"/>
    </location>
    <ligand>
        <name>S-adenosyl-L-methionine</name>
        <dbReference type="ChEBI" id="CHEBI:59789"/>
    </ligand>
</feature>
<evidence type="ECO:0000255" key="1">
    <source>
        <dbReference type="HAMAP-Rule" id="MF_00658"/>
    </source>
</evidence>
<gene>
    <name evidence="1" type="primary">rlmH</name>
    <name type="ordered locus">Rsph17025_0155</name>
</gene>
<name>RLMH_CERS5</name>
<organism>
    <name type="scientific">Cereibacter sphaeroides (strain ATCC 17025 / ATH 2.4.3)</name>
    <name type="common">Rhodobacter sphaeroides</name>
    <dbReference type="NCBI Taxonomy" id="349102"/>
    <lineage>
        <taxon>Bacteria</taxon>
        <taxon>Pseudomonadati</taxon>
        <taxon>Pseudomonadota</taxon>
        <taxon>Alphaproteobacteria</taxon>
        <taxon>Rhodobacterales</taxon>
        <taxon>Paracoccaceae</taxon>
        <taxon>Cereibacter</taxon>
    </lineage>
</organism>
<dbReference type="EC" id="2.1.1.177" evidence="1"/>
<dbReference type="EMBL" id="CP000661">
    <property type="protein sequence ID" value="ABP69066.1"/>
    <property type="molecule type" value="Genomic_DNA"/>
</dbReference>
<dbReference type="SMR" id="A4WNV2"/>
<dbReference type="STRING" id="349102.Rsph17025_0155"/>
<dbReference type="KEGG" id="rsq:Rsph17025_0155"/>
<dbReference type="eggNOG" id="COG1576">
    <property type="taxonomic scope" value="Bacteria"/>
</dbReference>
<dbReference type="HOGENOM" id="CLU_100552_1_1_5"/>
<dbReference type="BioCyc" id="RSPH349102:G1G8M-156-MONOMER"/>
<dbReference type="GO" id="GO:0005737">
    <property type="term" value="C:cytoplasm"/>
    <property type="evidence" value="ECO:0007669"/>
    <property type="project" value="UniProtKB-SubCell"/>
</dbReference>
<dbReference type="GO" id="GO:0070038">
    <property type="term" value="F:rRNA (pseudouridine-N3-)-methyltransferase activity"/>
    <property type="evidence" value="ECO:0007669"/>
    <property type="project" value="UniProtKB-UniRule"/>
</dbReference>
<dbReference type="CDD" id="cd18081">
    <property type="entry name" value="RlmH-like"/>
    <property type="match status" value="1"/>
</dbReference>
<dbReference type="Gene3D" id="3.40.1280.10">
    <property type="match status" value="1"/>
</dbReference>
<dbReference type="HAMAP" id="MF_00658">
    <property type="entry name" value="23SrRNA_methyltr_H"/>
    <property type="match status" value="1"/>
</dbReference>
<dbReference type="InterPro" id="IPR029028">
    <property type="entry name" value="Alpha/beta_knot_MTases"/>
</dbReference>
<dbReference type="InterPro" id="IPR003742">
    <property type="entry name" value="RlmH-like"/>
</dbReference>
<dbReference type="InterPro" id="IPR029026">
    <property type="entry name" value="tRNA_m1G_MTases_N"/>
</dbReference>
<dbReference type="NCBIfam" id="NF000988">
    <property type="entry name" value="PRK00103.2-2"/>
    <property type="match status" value="1"/>
</dbReference>
<dbReference type="NCBIfam" id="NF000989">
    <property type="entry name" value="PRK00103.2-3"/>
    <property type="match status" value="1"/>
</dbReference>
<dbReference type="PANTHER" id="PTHR33603">
    <property type="entry name" value="METHYLTRANSFERASE"/>
    <property type="match status" value="1"/>
</dbReference>
<dbReference type="PANTHER" id="PTHR33603:SF1">
    <property type="entry name" value="RIBOSOMAL RNA LARGE SUBUNIT METHYLTRANSFERASE H"/>
    <property type="match status" value="1"/>
</dbReference>
<dbReference type="Pfam" id="PF02590">
    <property type="entry name" value="SPOUT_MTase"/>
    <property type="match status" value="1"/>
</dbReference>
<dbReference type="PIRSF" id="PIRSF004505">
    <property type="entry name" value="MT_bac"/>
    <property type="match status" value="1"/>
</dbReference>
<dbReference type="SUPFAM" id="SSF75217">
    <property type="entry name" value="alpha/beta knot"/>
    <property type="match status" value="1"/>
</dbReference>
<keyword id="KW-0963">Cytoplasm</keyword>
<keyword id="KW-0489">Methyltransferase</keyword>
<keyword id="KW-0698">rRNA processing</keyword>
<keyword id="KW-0949">S-adenosyl-L-methionine</keyword>
<keyword id="KW-0808">Transferase</keyword>
<protein>
    <recommendedName>
        <fullName evidence="1">Ribosomal RNA large subunit methyltransferase H</fullName>
        <ecNumber evidence="1">2.1.1.177</ecNumber>
    </recommendedName>
    <alternativeName>
        <fullName evidence="1">23S rRNA (pseudouridine1915-N3)-methyltransferase</fullName>
    </alternativeName>
    <alternativeName>
        <fullName evidence="1">23S rRNA m3Psi1915 methyltransferase</fullName>
    </alternativeName>
    <alternativeName>
        <fullName evidence="1">rRNA (pseudouridine-N3-)-methyltransferase RlmH</fullName>
    </alternativeName>
</protein>
<proteinExistence type="inferred from homology"/>
<sequence length="155" mass="16989">MKLQLCAVGRLRSGPERDLVEDYLGRFERTGRPLGLPAVQLLEVEDRKGGGMEAEADLLARAMAPGAVLAILDERGRTLSSPEFAEQLARWRDAGRDVALAIGGADGLAPRLRDRADLALSFGRMVWPHMLVRVMLAEQLYRAATILAGSPYHRV</sequence>